<feature type="transit peptide" description="Chloroplast" evidence="1">
    <location>
        <begin position="1"/>
        <end position="54"/>
    </location>
</feature>
<feature type="chain" id="PRO_0000399280" description="Adenylosuccinate synthetase, chloroplastic">
    <location>
        <begin position="55"/>
        <end position="480"/>
    </location>
</feature>
<feature type="active site" description="Proton acceptor" evidence="2">
    <location>
        <position position="70"/>
    </location>
</feature>
<feature type="active site" description="Proton donor" evidence="2">
    <location>
        <position position="98"/>
    </location>
</feature>
<feature type="binding site" evidence="2">
    <location>
        <begin position="69"/>
        <end position="75"/>
    </location>
    <ligand>
        <name>GTP</name>
        <dbReference type="ChEBI" id="CHEBI:37565"/>
    </ligand>
</feature>
<feature type="binding site" description="in other chain" evidence="2">
    <location>
        <begin position="70"/>
        <end position="73"/>
    </location>
    <ligand>
        <name>IMP</name>
        <dbReference type="ChEBI" id="CHEBI:58053"/>
        <note>ligand shared between dimeric partners</note>
    </ligand>
</feature>
<feature type="binding site" evidence="2">
    <location>
        <position position="70"/>
    </location>
    <ligand>
        <name>Mg(2+)</name>
        <dbReference type="ChEBI" id="CHEBI:18420"/>
    </ligand>
</feature>
<feature type="binding site" description="in other chain" evidence="2">
    <location>
        <begin position="95"/>
        <end position="98"/>
    </location>
    <ligand>
        <name>IMP</name>
        <dbReference type="ChEBI" id="CHEBI:58053"/>
        <note>ligand shared between dimeric partners</note>
    </ligand>
</feature>
<feature type="binding site" evidence="2">
    <location>
        <begin position="97"/>
        <end position="99"/>
    </location>
    <ligand>
        <name>GTP</name>
        <dbReference type="ChEBI" id="CHEBI:37565"/>
    </ligand>
</feature>
<feature type="binding site" evidence="2">
    <location>
        <position position="97"/>
    </location>
    <ligand>
        <name>Mg(2+)</name>
        <dbReference type="ChEBI" id="CHEBI:18420"/>
    </ligand>
</feature>
<feature type="binding site" description="in other chain" evidence="2">
    <location>
        <position position="187"/>
    </location>
    <ligand>
        <name>IMP</name>
        <dbReference type="ChEBI" id="CHEBI:58053"/>
        <note>ligand shared between dimeric partners</note>
    </ligand>
</feature>
<feature type="binding site" evidence="2">
    <location>
        <position position="201"/>
    </location>
    <ligand>
        <name>IMP</name>
        <dbReference type="ChEBI" id="CHEBI:58053"/>
        <note>ligand shared between dimeric partners</note>
    </ligand>
</feature>
<feature type="binding site" description="in other chain" evidence="2">
    <location>
        <position position="278"/>
    </location>
    <ligand>
        <name>IMP</name>
        <dbReference type="ChEBI" id="CHEBI:58053"/>
        <note>ligand shared between dimeric partners</note>
    </ligand>
</feature>
<feature type="binding site" description="in other chain" evidence="2">
    <location>
        <position position="293"/>
    </location>
    <ligand>
        <name>IMP</name>
        <dbReference type="ChEBI" id="CHEBI:58053"/>
        <note>ligand shared between dimeric partners</note>
    </ligand>
</feature>
<feature type="binding site" evidence="2">
    <location>
        <begin position="353"/>
        <end position="359"/>
    </location>
    <ligand>
        <name>substrate</name>
    </ligand>
</feature>
<feature type="binding site" description="in other chain" evidence="2">
    <location>
        <position position="357"/>
    </location>
    <ligand>
        <name>IMP</name>
        <dbReference type="ChEBI" id="CHEBI:58053"/>
        <note>ligand shared between dimeric partners</note>
    </ligand>
</feature>
<feature type="binding site" evidence="2">
    <location>
        <position position="359"/>
    </location>
    <ligand>
        <name>GTP</name>
        <dbReference type="ChEBI" id="CHEBI:37565"/>
    </ligand>
</feature>
<feature type="binding site" evidence="2">
    <location>
        <begin position="385"/>
        <end position="387"/>
    </location>
    <ligand>
        <name>GTP</name>
        <dbReference type="ChEBI" id="CHEBI:37565"/>
    </ligand>
</feature>
<feature type="binding site" evidence="2">
    <location>
        <begin position="468"/>
        <end position="470"/>
    </location>
    <ligand>
        <name>GTP</name>
        <dbReference type="ChEBI" id="CHEBI:37565"/>
    </ligand>
</feature>
<comment type="function">
    <text evidence="2">Plays an important role in the de novo pathway and in the salvage pathway of purine nucleotide biosynthesis. Catalyzes the first committed step in the biosynthesis of AMP from IMP.</text>
</comment>
<comment type="catalytic activity">
    <reaction evidence="2">
        <text>IMP + L-aspartate + GTP = N(6)-(1,2-dicarboxyethyl)-AMP + GDP + phosphate + 2 H(+)</text>
        <dbReference type="Rhea" id="RHEA:15753"/>
        <dbReference type="ChEBI" id="CHEBI:15378"/>
        <dbReference type="ChEBI" id="CHEBI:29991"/>
        <dbReference type="ChEBI" id="CHEBI:37565"/>
        <dbReference type="ChEBI" id="CHEBI:43474"/>
        <dbReference type="ChEBI" id="CHEBI:57567"/>
        <dbReference type="ChEBI" id="CHEBI:58053"/>
        <dbReference type="ChEBI" id="CHEBI:58189"/>
        <dbReference type="EC" id="6.3.4.4"/>
    </reaction>
</comment>
<comment type="cofactor">
    <cofactor evidence="2">
        <name>Mg(2+)</name>
        <dbReference type="ChEBI" id="CHEBI:18420"/>
    </cofactor>
    <text evidence="2">Binds 1 Mg(2+) ion per subunit.</text>
</comment>
<comment type="pathway">
    <text evidence="2">Purine metabolism; AMP biosynthesis via de novo pathway; AMP from IMP: step 1/2.</text>
</comment>
<comment type="subunit">
    <text evidence="2">Homodimer.</text>
</comment>
<comment type="subcellular location">
    <subcellularLocation>
        <location evidence="2">Plastid</location>
        <location evidence="2">Chloroplast</location>
    </subcellularLocation>
</comment>
<comment type="similarity">
    <text evidence="2">Belongs to the adenylosuccinate synthetase family.</text>
</comment>
<evidence type="ECO:0000255" key="1"/>
<evidence type="ECO:0000255" key="2">
    <source>
        <dbReference type="HAMAP-Rule" id="MF_03125"/>
    </source>
</evidence>
<evidence type="ECO:0000312" key="3">
    <source>
        <dbReference type="EMBL" id="CEF98222.1"/>
    </source>
</evidence>
<accession>Q017T9</accession>
<accession>A0A090M6B2</accession>
<dbReference type="EC" id="6.3.4.4" evidence="2"/>
<dbReference type="EMBL" id="CAID01000006">
    <property type="protein sequence ID" value="CEF98222.1"/>
    <property type="molecule type" value="Genomic_DNA"/>
</dbReference>
<dbReference type="SMR" id="Q017T9"/>
<dbReference type="FunCoup" id="Q017T9">
    <property type="interactions" value="1577"/>
</dbReference>
<dbReference type="STRING" id="70448.Q017T9"/>
<dbReference type="eggNOG" id="KOG1355">
    <property type="taxonomic scope" value="Eukaryota"/>
</dbReference>
<dbReference type="InParanoid" id="Q017T9"/>
<dbReference type="OrthoDB" id="10265645at2759"/>
<dbReference type="UniPathway" id="UPA00075">
    <property type="reaction ID" value="UER00335"/>
</dbReference>
<dbReference type="Proteomes" id="UP000009170">
    <property type="component" value="Chromosome 6"/>
</dbReference>
<dbReference type="GO" id="GO:0009507">
    <property type="term" value="C:chloroplast"/>
    <property type="evidence" value="ECO:0007669"/>
    <property type="project" value="UniProtKB-SubCell"/>
</dbReference>
<dbReference type="GO" id="GO:0004019">
    <property type="term" value="F:adenylosuccinate synthase activity"/>
    <property type="evidence" value="ECO:0007669"/>
    <property type="project" value="UniProtKB-UniRule"/>
</dbReference>
<dbReference type="GO" id="GO:0005525">
    <property type="term" value="F:GTP binding"/>
    <property type="evidence" value="ECO:0007669"/>
    <property type="project" value="UniProtKB-UniRule"/>
</dbReference>
<dbReference type="GO" id="GO:0000287">
    <property type="term" value="F:magnesium ion binding"/>
    <property type="evidence" value="ECO:0007669"/>
    <property type="project" value="UniProtKB-UniRule"/>
</dbReference>
<dbReference type="GO" id="GO:0044208">
    <property type="term" value="P:'de novo' AMP biosynthetic process"/>
    <property type="evidence" value="ECO:0007669"/>
    <property type="project" value="UniProtKB-UniRule"/>
</dbReference>
<dbReference type="GO" id="GO:0046040">
    <property type="term" value="P:IMP metabolic process"/>
    <property type="evidence" value="ECO:0007669"/>
    <property type="project" value="TreeGrafter"/>
</dbReference>
<dbReference type="CDD" id="cd03108">
    <property type="entry name" value="AdSS"/>
    <property type="match status" value="1"/>
</dbReference>
<dbReference type="FunFam" id="3.90.170.10:FF:000001">
    <property type="entry name" value="Adenylosuccinate synthetase"/>
    <property type="match status" value="1"/>
</dbReference>
<dbReference type="FunFam" id="1.10.300.10:FF:000002">
    <property type="entry name" value="Adenylosuccinate synthetase, chloroplastic"/>
    <property type="match status" value="1"/>
</dbReference>
<dbReference type="Gene3D" id="3.40.440.10">
    <property type="entry name" value="Adenylosuccinate Synthetase, subunit A, domain 1"/>
    <property type="match status" value="1"/>
</dbReference>
<dbReference type="Gene3D" id="1.10.300.10">
    <property type="entry name" value="Adenylosuccinate Synthetase, subunit A, domain 2"/>
    <property type="match status" value="1"/>
</dbReference>
<dbReference type="Gene3D" id="3.90.170.10">
    <property type="entry name" value="Adenylosuccinate Synthetase, subunit A, domain 3"/>
    <property type="match status" value="1"/>
</dbReference>
<dbReference type="HAMAP" id="MF_00011">
    <property type="entry name" value="Adenylosucc_synth"/>
    <property type="match status" value="1"/>
</dbReference>
<dbReference type="InterPro" id="IPR018220">
    <property type="entry name" value="Adenylosuccin_syn_GTP-bd"/>
</dbReference>
<dbReference type="InterPro" id="IPR033128">
    <property type="entry name" value="Adenylosuccin_syn_Lys_AS"/>
</dbReference>
<dbReference type="InterPro" id="IPR042109">
    <property type="entry name" value="Adenylosuccinate_synth_dom1"/>
</dbReference>
<dbReference type="InterPro" id="IPR042110">
    <property type="entry name" value="Adenylosuccinate_synth_dom2"/>
</dbReference>
<dbReference type="InterPro" id="IPR042111">
    <property type="entry name" value="Adenylosuccinate_synth_dom3"/>
</dbReference>
<dbReference type="InterPro" id="IPR001114">
    <property type="entry name" value="Adenylosuccinate_synthetase"/>
</dbReference>
<dbReference type="InterPro" id="IPR027417">
    <property type="entry name" value="P-loop_NTPase"/>
</dbReference>
<dbReference type="NCBIfam" id="NF002223">
    <property type="entry name" value="PRK01117.1"/>
    <property type="match status" value="1"/>
</dbReference>
<dbReference type="NCBIfam" id="TIGR00184">
    <property type="entry name" value="purA"/>
    <property type="match status" value="1"/>
</dbReference>
<dbReference type="PANTHER" id="PTHR11846">
    <property type="entry name" value="ADENYLOSUCCINATE SYNTHETASE"/>
    <property type="match status" value="1"/>
</dbReference>
<dbReference type="PANTHER" id="PTHR11846:SF0">
    <property type="entry name" value="ADENYLOSUCCINATE SYNTHETASE"/>
    <property type="match status" value="1"/>
</dbReference>
<dbReference type="Pfam" id="PF00709">
    <property type="entry name" value="Adenylsucc_synt"/>
    <property type="match status" value="1"/>
</dbReference>
<dbReference type="SMART" id="SM00788">
    <property type="entry name" value="Adenylsucc_synt"/>
    <property type="match status" value="1"/>
</dbReference>
<dbReference type="SUPFAM" id="SSF52540">
    <property type="entry name" value="P-loop containing nucleoside triphosphate hydrolases"/>
    <property type="match status" value="1"/>
</dbReference>
<dbReference type="PROSITE" id="PS01266">
    <property type="entry name" value="ADENYLOSUCCIN_SYN_1"/>
    <property type="match status" value="1"/>
</dbReference>
<dbReference type="PROSITE" id="PS00513">
    <property type="entry name" value="ADENYLOSUCCIN_SYN_2"/>
    <property type="match status" value="1"/>
</dbReference>
<sequence>MATARVMVADRARAFGGTTATRARRDDQGRRVTIARGIPSRARVVVARASERAYAELGNVCAVLGSQWGDEGKGKLVDILAREYDVVARCQGGANAGHTIYDDNGKKYALHLVPSGILNENATCVVGNGVVVHLPGMFEEIDKLLQAGVDARGRMIVSDRAHLLFDLHKEIDGLREEELSGNKIGTTKRGIGPAYASKATRNGVRLGDIRDEERFATMLRALAADAAARFEGFQYDVEAEIVRYKEIAERIEPFIADTVEYINEAHDSGKKILVEGANATMLDLDFGTYPFVTSSNPALGGVCNGLGLAPRKFKTIIGVAKAYTTRVGAGPYPTELFGDVADKLRELGYEYGTTTGRPRRIGWLDMVALNYANLINGFTHLNITKLDVLSEMDELKIGVAYKLPNGKTTKSFPADIATLEKVETVYETLPGWKEDISKVRTWDDLPENAKKYVLRVEELAGVECKFIGVGPGRDAMVIKP</sequence>
<organism>
    <name type="scientific">Ostreococcus tauri</name>
    <dbReference type="NCBI Taxonomy" id="70448"/>
    <lineage>
        <taxon>Eukaryota</taxon>
        <taxon>Viridiplantae</taxon>
        <taxon>Chlorophyta</taxon>
        <taxon>Mamiellophyceae</taxon>
        <taxon>Mamiellales</taxon>
        <taxon>Bathycoccaceae</taxon>
        <taxon>Ostreococcus</taxon>
    </lineage>
</organism>
<name>PURA_OSTTA</name>
<keyword id="KW-0150">Chloroplast</keyword>
<keyword id="KW-0342">GTP-binding</keyword>
<keyword id="KW-0436">Ligase</keyword>
<keyword id="KW-0460">Magnesium</keyword>
<keyword id="KW-0479">Metal-binding</keyword>
<keyword id="KW-0547">Nucleotide-binding</keyword>
<keyword id="KW-0934">Plastid</keyword>
<keyword id="KW-0658">Purine biosynthesis</keyword>
<keyword id="KW-1185">Reference proteome</keyword>
<keyword id="KW-0809">Transit peptide</keyword>
<gene>
    <name evidence="2" type="primary">PURA</name>
    <name evidence="3" type="ordered locus">Ot06g00520</name>
</gene>
<protein>
    <recommendedName>
        <fullName evidence="2">Adenylosuccinate synthetase, chloroplastic</fullName>
        <shortName evidence="2">AMPSase</shortName>
        <shortName evidence="2">AdSS</shortName>
        <ecNumber evidence="2">6.3.4.4</ecNumber>
    </recommendedName>
    <alternativeName>
        <fullName evidence="2">IMP--aspartate ligase</fullName>
    </alternativeName>
</protein>
<reference key="1">
    <citation type="journal article" date="2006" name="Proc. Natl. Acad. Sci. U.S.A.">
        <title>Genome analysis of the smallest free-living eukaryote Ostreococcus tauri unveils many unique features.</title>
        <authorList>
            <person name="Derelle E."/>
            <person name="Ferraz C."/>
            <person name="Rombauts S."/>
            <person name="Rouze P."/>
            <person name="Worden A.Z."/>
            <person name="Robbens S."/>
            <person name="Partensky F."/>
            <person name="Degroeve S."/>
            <person name="Echeynie S."/>
            <person name="Cooke R."/>
            <person name="Saeys Y."/>
            <person name="Wuyts J."/>
            <person name="Jabbari K."/>
            <person name="Bowler C."/>
            <person name="Panaud O."/>
            <person name="Piegu B."/>
            <person name="Ball S.G."/>
            <person name="Ral J.-P."/>
            <person name="Bouget F.-Y."/>
            <person name="Piganeau G."/>
            <person name="De Baets B."/>
            <person name="Picard A."/>
            <person name="Delseny M."/>
            <person name="Demaille J."/>
            <person name="Van de Peer Y."/>
            <person name="Moreau H."/>
        </authorList>
    </citation>
    <scope>NUCLEOTIDE SEQUENCE [LARGE SCALE GENOMIC DNA]</scope>
    <source>
        <strain>OTTH0595</strain>
    </source>
</reference>
<proteinExistence type="inferred from homology"/>